<organism>
    <name type="scientific">Saccharomyces cerevisiae (strain ATCC 204508 / S288c)</name>
    <name type="common">Baker's yeast</name>
    <dbReference type="NCBI Taxonomy" id="559292"/>
    <lineage>
        <taxon>Eukaryota</taxon>
        <taxon>Fungi</taxon>
        <taxon>Dikarya</taxon>
        <taxon>Ascomycota</taxon>
        <taxon>Saccharomycotina</taxon>
        <taxon>Saccharomycetes</taxon>
        <taxon>Saccharomycetales</taxon>
        <taxon>Saccharomycetaceae</taxon>
        <taxon>Saccharomyces</taxon>
    </lineage>
</organism>
<gene>
    <name type="primary">MSH5</name>
    <name type="ordered locus">YDL154W</name>
    <name type="ORF">D1542</name>
</gene>
<reference key="1">
    <citation type="journal article" date="1995" name="Genes Dev.">
        <title>MSH5, a novel MutS homolog, facilitates meiotic reciprocal recombination between homologs in Saccharomyces cerevisiae but not mismatch repair.</title>
        <authorList>
            <person name="Hollingsworth N.M."/>
            <person name="Ponte L."/>
            <person name="Halsey C."/>
        </authorList>
    </citation>
    <scope>NUCLEOTIDE SEQUENCE [GENOMIC DNA]</scope>
    <source>
        <strain>ATCC 204508 / S288c</strain>
    </source>
</reference>
<reference key="2">
    <citation type="journal article" date="1996" name="Yeast">
        <title>Analysis of a 23 kb region on the left arm of yeast chromosome IV.</title>
        <authorList>
            <person name="Delaveau T.T.D."/>
            <person name="Blugeon C."/>
            <person name="Jacq C."/>
            <person name="Perea J."/>
        </authorList>
    </citation>
    <scope>NUCLEOTIDE SEQUENCE [GENOMIC DNA]</scope>
    <source>
        <strain>ATCC 96604 / S288c / FY1679</strain>
    </source>
</reference>
<reference key="3">
    <citation type="journal article" date="1997" name="Nature">
        <title>The nucleotide sequence of Saccharomyces cerevisiae chromosome IV.</title>
        <authorList>
            <person name="Jacq C."/>
            <person name="Alt-Moerbe J."/>
            <person name="Andre B."/>
            <person name="Arnold W."/>
            <person name="Bahr A."/>
            <person name="Ballesta J.P.G."/>
            <person name="Bargues M."/>
            <person name="Baron L."/>
            <person name="Becker A."/>
            <person name="Biteau N."/>
            <person name="Bloecker H."/>
            <person name="Blugeon C."/>
            <person name="Boskovic J."/>
            <person name="Brandt P."/>
            <person name="Brueckner M."/>
            <person name="Buitrago M.J."/>
            <person name="Coster F."/>
            <person name="Delaveau T."/>
            <person name="del Rey F."/>
            <person name="Dujon B."/>
            <person name="Eide L.G."/>
            <person name="Garcia-Cantalejo J.M."/>
            <person name="Goffeau A."/>
            <person name="Gomez-Peris A."/>
            <person name="Granotier C."/>
            <person name="Hanemann V."/>
            <person name="Hankeln T."/>
            <person name="Hoheisel J.D."/>
            <person name="Jaeger W."/>
            <person name="Jimenez A."/>
            <person name="Jonniaux J.-L."/>
            <person name="Kraemer C."/>
            <person name="Kuester H."/>
            <person name="Laamanen P."/>
            <person name="Legros Y."/>
            <person name="Louis E.J."/>
            <person name="Moeller-Rieker S."/>
            <person name="Monnet A."/>
            <person name="Moro M."/>
            <person name="Mueller-Auer S."/>
            <person name="Nussbaumer B."/>
            <person name="Paricio N."/>
            <person name="Paulin L."/>
            <person name="Perea J."/>
            <person name="Perez-Alonso M."/>
            <person name="Perez-Ortin J.E."/>
            <person name="Pohl T.M."/>
            <person name="Prydz H."/>
            <person name="Purnelle B."/>
            <person name="Rasmussen S.W."/>
            <person name="Remacha M.A."/>
            <person name="Revuelta J.L."/>
            <person name="Rieger M."/>
            <person name="Salom D."/>
            <person name="Saluz H.P."/>
            <person name="Saiz J.E."/>
            <person name="Saren A.-M."/>
            <person name="Schaefer M."/>
            <person name="Scharfe M."/>
            <person name="Schmidt E.R."/>
            <person name="Schneider C."/>
            <person name="Scholler P."/>
            <person name="Schwarz S."/>
            <person name="Soler-Mira A."/>
            <person name="Urrestarazu L.A."/>
            <person name="Verhasselt P."/>
            <person name="Vissers S."/>
            <person name="Voet M."/>
            <person name="Volckaert G."/>
            <person name="Wagner G."/>
            <person name="Wambutt R."/>
            <person name="Wedler E."/>
            <person name="Wedler H."/>
            <person name="Woelfl S."/>
            <person name="Harris D.E."/>
            <person name="Bowman S."/>
            <person name="Brown D."/>
            <person name="Churcher C.M."/>
            <person name="Connor R."/>
            <person name="Dedman K."/>
            <person name="Gentles S."/>
            <person name="Hamlin N."/>
            <person name="Hunt S."/>
            <person name="Jones L."/>
            <person name="McDonald S."/>
            <person name="Murphy L.D."/>
            <person name="Niblett D."/>
            <person name="Odell C."/>
            <person name="Oliver K."/>
            <person name="Rajandream M.A."/>
            <person name="Richards C."/>
            <person name="Shore L."/>
            <person name="Walsh S.V."/>
            <person name="Barrell B.G."/>
            <person name="Dietrich F.S."/>
            <person name="Mulligan J.T."/>
            <person name="Allen E."/>
            <person name="Araujo R."/>
            <person name="Aviles E."/>
            <person name="Berno A."/>
            <person name="Carpenter J."/>
            <person name="Chen E."/>
            <person name="Cherry J.M."/>
            <person name="Chung E."/>
            <person name="Duncan M."/>
            <person name="Hunicke-Smith S."/>
            <person name="Hyman R.W."/>
            <person name="Komp C."/>
            <person name="Lashkari D."/>
            <person name="Lew H."/>
            <person name="Lin D."/>
            <person name="Mosedale D."/>
            <person name="Nakahara K."/>
            <person name="Namath A."/>
            <person name="Oefner P."/>
            <person name="Oh C."/>
            <person name="Petel F.X."/>
            <person name="Roberts D."/>
            <person name="Schramm S."/>
            <person name="Schroeder M."/>
            <person name="Shogren T."/>
            <person name="Shroff N."/>
            <person name="Winant A."/>
            <person name="Yelton M.A."/>
            <person name="Botstein D."/>
            <person name="Davis R.W."/>
            <person name="Johnston M."/>
            <person name="Andrews S."/>
            <person name="Brinkman R."/>
            <person name="Cooper J."/>
            <person name="Ding H."/>
            <person name="Du Z."/>
            <person name="Favello A."/>
            <person name="Fulton L."/>
            <person name="Gattung S."/>
            <person name="Greco T."/>
            <person name="Hallsworth K."/>
            <person name="Hawkins J."/>
            <person name="Hillier L.W."/>
            <person name="Jier M."/>
            <person name="Johnson D."/>
            <person name="Johnston L."/>
            <person name="Kirsten J."/>
            <person name="Kucaba T."/>
            <person name="Langston Y."/>
            <person name="Latreille P."/>
            <person name="Le T."/>
            <person name="Mardis E."/>
            <person name="Menezes S."/>
            <person name="Miller N."/>
            <person name="Nhan M."/>
            <person name="Pauley A."/>
            <person name="Peluso D."/>
            <person name="Rifkin L."/>
            <person name="Riles L."/>
            <person name="Taich A."/>
            <person name="Trevaskis E."/>
            <person name="Vignati D."/>
            <person name="Wilcox L."/>
            <person name="Wohldman P."/>
            <person name="Vaudin M."/>
            <person name="Wilson R."/>
            <person name="Waterston R."/>
            <person name="Albermann K."/>
            <person name="Hani J."/>
            <person name="Heumann K."/>
            <person name="Kleine K."/>
            <person name="Mewes H.-W."/>
            <person name="Zollner A."/>
            <person name="Zaccaria P."/>
        </authorList>
    </citation>
    <scope>NUCLEOTIDE SEQUENCE [LARGE SCALE GENOMIC DNA]</scope>
    <source>
        <strain>ATCC 204508 / S288c</strain>
    </source>
</reference>
<reference key="4">
    <citation type="journal article" date="2014" name="G3 (Bethesda)">
        <title>The reference genome sequence of Saccharomyces cerevisiae: Then and now.</title>
        <authorList>
            <person name="Engel S.R."/>
            <person name="Dietrich F.S."/>
            <person name="Fisk D.G."/>
            <person name="Binkley G."/>
            <person name="Balakrishnan R."/>
            <person name="Costanzo M.C."/>
            <person name="Dwight S.S."/>
            <person name="Hitz B.C."/>
            <person name="Karra K."/>
            <person name="Nash R.S."/>
            <person name="Weng S."/>
            <person name="Wong E.D."/>
            <person name="Lloyd P."/>
            <person name="Skrzypek M.S."/>
            <person name="Miyasato S.R."/>
            <person name="Simison M."/>
            <person name="Cherry J.M."/>
        </authorList>
    </citation>
    <scope>GENOME REANNOTATION</scope>
    <source>
        <strain>ATCC 204508 / S288c</strain>
    </source>
</reference>
<reference key="5">
    <citation type="journal article" date="1997" name="J. Biol. Chem.">
        <title>Conserved properties between functionally distinct MutS homologs in yeast.</title>
        <authorList>
            <person name="Pochart P."/>
            <person name="Woltering D."/>
            <person name="Hollingsworth N.M."/>
        </authorList>
    </citation>
    <scope>INTERACTION WITH MSH4</scope>
    <scope>MUTAGENESIS OF 643-GLY-ALA-644 AND GLY-648</scope>
</reference>
<name>MSH5_YEAST</name>
<evidence type="ECO:0000255" key="1"/>
<evidence type="ECO:0000269" key="2">
    <source>
    </source>
</evidence>
<evidence type="ECO:0000305" key="3"/>
<protein>
    <recommendedName>
        <fullName>MutS protein homolog 5</fullName>
    </recommendedName>
</protein>
<comment type="function">
    <text>Involved in meiotic recombination. Facilitate crossovers between homologs during meiosis.</text>
</comment>
<comment type="subunit">
    <text evidence="2">Heterooligomer of MSH4 and MSH5.</text>
</comment>
<comment type="interaction">
    <interactant intactId="EBI-11377">
        <id>Q12175</id>
    </interactant>
    <interactant intactId="EBI-11371">
        <id>P40965</id>
        <label>MSH4</label>
    </interactant>
    <organismsDiffer>false</organismsDiffer>
    <experiments>2</experiments>
</comment>
<comment type="miscellaneous">
    <text>Two distinct classes of crossovers have been demonstrated in budding yeast. Class I is MSH4/MSH5 dependent and exhibits crossover interference. Class II is MUS81/MMS4 dependent and exhibits no interference.</text>
</comment>
<comment type="similarity">
    <text evidence="3">Belongs to the DNA mismatch repair MutS family.</text>
</comment>
<proteinExistence type="evidence at protein level"/>
<accession>Q12175</accession>
<accession>D6VRJ6</accession>
<keyword id="KW-0067">ATP-binding</keyword>
<keyword id="KW-0227">DNA damage</keyword>
<keyword id="KW-0234">DNA repair</keyword>
<keyword id="KW-0238">DNA-binding</keyword>
<keyword id="KW-0547">Nucleotide-binding</keyword>
<keyword id="KW-1185">Reference proteome</keyword>
<feature type="chain" id="PRO_0000115206" description="MutS protein homolog 5">
    <location>
        <begin position="1"/>
        <end position="901"/>
    </location>
</feature>
<feature type="binding site" evidence="1">
    <location>
        <begin position="643"/>
        <end position="650"/>
    </location>
    <ligand>
        <name>ATP</name>
        <dbReference type="ChEBI" id="CHEBI:30616"/>
    </ligand>
</feature>
<feature type="mutagenesis site" description="Abolishes function; no effect on interaction with MSH4." evidence="2">
    <original>GA</original>
    <variation>DV</variation>
    <location>
        <begin position="643"/>
        <end position="644"/>
    </location>
</feature>
<feature type="mutagenesis site" description="Abolishes function; no effect on interaction with MSH4." evidence="2">
    <original>G</original>
    <variation>R</variation>
    <location>
        <position position="648"/>
    </location>
</feature>
<dbReference type="EMBL" id="L42517">
    <property type="protein sequence ID" value="AAA67649.1"/>
    <property type="molecule type" value="Genomic_DNA"/>
</dbReference>
<dbReference type="EMBL" id="X97751">
    <property type="protein sequence ID" value="CAA66337.1"/>
    <property type="molecule type" value="Genomic_DNA"/>
</dbReference>
<dbReference type="EMBL" id="Z74202">
    <property type="protein sequence ID" value="CAA98728.1"/>
    <property type="molecule type" value="Genomic_DNA"/>
</dbReference>
<dbReference type="EMBL" id="BK006938">
    <property type="protein sequence ID" value="DAA11706.1"/>
    <property type="molecule type" value="Genomic_DNA"/>
</dbReference>
<dbReference type="PIR" id="S67702">
    <property type="entry name" value="S67702"/>
</dbReference>
<dbReference type="RefSeq" id="NP_010127.1">
    <property type="nucleotide sequence ID" value="NM_001180214.1"/>
</dbReference>
<dbReference type="SMR" id="Q12175"/>
<dbReference type="BioGRID" id="31909">
    <property type="interactions" value="39"/>
</dbReference>
<dbReference type="ComplexPortal" id="CPX-1704">
    <property type="entry name" value="MutSgamma meiotic recombination complex"/>
</dbReference>
<dbReference type="DIP" id="DIP-1457N"/>
<dbReference type="FunCoup" id="Q12175">
    <property type="interactions" value="223"/>
</dbReference>
<dbReference type="IntAct" id="Q12175">
    <property type="interactions" value="8"/>
</dbReference>
<dbReference type="MINT" id="Q12175"/>
<dbReference type="STRING" id="4932.YDL154W"/>
<dbReference type="iPTMnet" id="Q12175"/>
<dbReference type="PaxDb" id="4932-YDL154W"/>
<dbReference type="PeptideAtlas" id="Q12175"/>
<dbReference type="EnsemblFungi" id="YDL154W_mRNA">
    <property type="protein sequence ID" value="YDL154W"/>
    <property type="gene ID" value="YDL154W"/>
</dbReference>
<dbReference type="GeneID" id="851401"/>
<dbReference type="KEGG" id="sce:YDL154W"/>
<dbReference type="AGR" id="SGD:S000002313"/>
<dbReference type="SGD" id="S000002313">
    <property type="gene designation" value="MSH5"/>
</dbReference>
<dbReference type="VEuPathDB" id="FungiDB:YDL154W"/>
<dbReference type="eggNOG" id="KOG0221">
    <property type="taxonomic scope" value="Eukaryota"/>
</dbReference>
<dbReference type="GeneTree" id="ENSGT00550000074977"/>
<dbReference type="HOGENOM" id="CLU_002472_8_0_1"/>
<dbReference type="InParanoid" id="Q12175"/>
<dbReference type="OMA" id="CSVYFMP"/>
<dbReference type="OrthoDB" id="29596at2759"/>
<dbReference type="BioCyc" id="YEAST:G3O-29549-MONOMER"/>
<dbReference type="BioGRID-ORCS" id="851401">
    <property type="hits" value="0 hits in 10 CRISPR screens"/>
</dbReference>
<dbReference type="PRO" id="PR:Q12175"/>
<dbReference type="Proteomes" id="UP000002311">
    <property type="component" value="Chromosome IV"/>
</dbReference>
<dbReference type="RNAct" id="Q12175">
    <property type="molecule type" value="protein"/>
</dbReference>
<dbReference type="GO" id="GO:1990391">
    <property type="term" value="C:DNA repair complex"/>
    <property type="evidence" value="ECO:0000353"/>
    <property type="project" value="ComplexPortal"/>
</dbReference>
<dbReference type="GO" id="GO:0062128">
    <property type="term" value="C:MutSgamma complex"/>
    <property type="evidence" value="ECO:0000353"/>
    <property type="project" value="SGD"/>
</dbReference>
<dbReference type="GO" id="GO:0000228">
    <property type="term" value="C:nuclear chromosome"/>
    <property type="evidence" value="ECO:0000314"/>
    <property type="project" value="SGD"/>
</dbReference>
<dbReference type="GO" id="GO:0005634">
    <property type="term" value="C:nucleus"/>
    <property type="evidence" value="ECO:0007005"/>
    <property type="project" value="SGD"/>
</dbReference>
<dbReference type="GO" id="GO:0005524">
    <property type="term" value="F:ATP binding"/>
    <property type="evidence" value="ECO:0007669"/>
    <property type="project" value="UniProtKB-KW"/>
</dbReference>
<dbReference type="GO" id="GO:0140664">
    <property type="term" value="F:ATP-dependent DNA damage sensor activity"/>
    <property type="evidence" value="ECO:0007669"/>
    <property type="project" value="InterPro"/>
</dbReference>
<dbReference type="GO" id="GO:0030983">
    <property type="term" value="F:mismatched DNA binding"/>
    <property type="evidence" value="ECO:0007669"/>
    <property type="project" value="InterPro"/>
</dbReference>
<dbReference type="GO" id="GO:0051026">
    <property type="term" value="P:chiasma assembly"/>
    <property type="evidence" value="ECO:0000318"/>
    <property type="project" value="GO_Central"/>
</dbReference>
<dbReference type="GO" id="GO:0006298">
    <property type="term" value="P:mismatch repair"/>
    <property type="evidence" value="ECO:0007669"/>
    <property type="project" value="InterPro"/>
</dbReference>
<dbReference type="GO" id="GO:0007131">
    <property type="term" value="P:reciprocal meiotic recombination"/>
    <property type="evidence" value="ECO:0000315"/>
    <property type="project" value="SGD"/>
</dbReference>
<dbReference type="CDD" id="cd03281">
    <property type="entry name" value="ABC_MSH5_euk"/>
    <property type="match status" value="1"/>
</dbReference>
<dbReference type="FunFam" id="3.40.50.300:FF:002844">
    <property type="entry name" value="DNA mismatch repair protein"/>
    <property type="match status" value="1"/>
</dbReference>
<dbReference type="Gene3D" id="1.10.1420.10">
    <property type="match status" value="1"/>
</dbReference>
<dbReference type="Gene3D" id="3.40.50.300">
    <property type="entry name" value="P-loop containing nucleotide triphosphate hydrolases"/>
    <property type="match status" value="1"/>
</dbReference>
<dbReference type="InterPro" id="IPR011184">
    <property type="entry name" value="DNA_mismatch_repair_Msh2"/>
</dbReference>
<dbReference type="InterPro" id="IPR000432">
    <property type="entry name" value="DNA_mismatch_repair_MutS_C"/>
</dbReference>
<dbReference type="InterPro" id="IPR007696">
    <property type="entry name" value="DNA_mismatch_repair_MutS_core"/>
</dbReference>
<dbReference type="InterPro" id="IPR036187">
    <property type="entry name" value="DNA_mismatch_repair_MutS_sf"/>
</dbReference>
<dbReference type="InterPro" id="IPR045076">
    <property type="entry name" value="MutS"/>
</dbReference>
<dbReference type="InterPro" id="IPR027417">
    <property type="entry name" value="P-loop_NTPase"/>
</dbReference>
<dbReference type="PANTHER" id="PTHR11361">
    <property type="entry name" value="DNA MISMATCH REPAIR PROTEIN MUTS FAMILY MEMBER"/>
    <property type="match status" value="1"/>
</dbReference>
<dbReference type="PANTHER" id="PTHR11361:SF20">
    <property type="entry name" value="MUTS PROTEIN HOMOLOG 5"/>
    <property type="match status" value="1"/>
</dbReference>
<dbReference type="Pfam" id="PF05192">
    <property type="entry name" value="MutS_III"/>
    <property type="match status" value="1"/>
</dbReference>
<dbReference type="Pfam" id="PF00488">
    <property type="entry name" value="MutS_V"/>
    <property type="match status" value="1"/>
</dbReference>
<dbReference type="PIRSF" id="PIRSF005813">
    <property type="entry name" value="MSH2"/>
    <property type="match status" value="1"/>
</dbReference>
<dbReference type="SMART" id="SM00534">
    <property type="entry name" value="MUTSac"/>
    <property type="match status" value="1"/>
</dbReference>
<dbReference type="SMART" id="SM00533">
    <property type="entry name" value="MUTSd"/>
    <property type="match status" value="1"/>
</dbReference>
<dbReference type="SUPFAM" id="SSF48334">
    <property type="entry name" value="DNA repair protein MutS, domain III"/>
    <property type="match status" value="1"/>
</dbReference>
<dbReference type="SUPFAM" id="SSF52540">
    <property type="entry name" value="P-loop containing nucleoside triphosphate hydrolases"/>
    <property type="match status" value="1"/>
</dbReference>
<dbReference type="PROSITE" id="PS00486">
    <property type="entry name" value="DNA_MISMATCH_REPAIR_2"/>
    <property type="match status" value="1"/>
</dbReference>
<sequence length="901" mass="102209">MSHEWLISASETMRSIGNGEGLRDKGAVVANNDGEFNEGDTNREEDSSTIFSFDFDEEIVMCIDFSGGKLGCSILDYHTKTLKAFDQDYVVNKTTISSHDLIDDADMSSNDISLLLGLLIMEANPTVCLVPARLEDWIFDYIKTKCDEINCRLELQPIKRFKKWDLLQSLQLRGHDNQTILNDILSNSKFTTTVTLGTVGCILANHEQLGEYNDSTASSNMVTGRLVQNAFEDVIHGIRYIDIRDRMVLDENTISALHIFPTAHKLGHDKMMRNGFFSVFELFNQVSSDYARRILKSWLINPLTNKKRIETRYSIIRTLLDKQNAIIFSDLSQSIKRCPDAFGFINQLRSGKSTLGTWSKVASFLEKGIAIFQLVSSLKLGSDEANILHDIKNKVDISALKECLRKVETVIDFDTSRDTKTLTINTGVDNRLDECRNIYNHLEGILLDVARETQIFLLNTMPQEDCKTTKSLEKLVNAVYIPQLGYLVTISVLMEPLLDGIPNLQWEEIFRSSENIYFKNGRVLELDETYGDIYGAISDFEIEILFSLQEQILRRKTQLTAYNILLSELEILLSFAQVSAERNYAEPQLVEDECILEIINGRHALYETFLDNYIPNSTMIDGGLFSELSWCEQNKGRIIVVTGANASGKSVYLTQNGLIVYLAQIGCFVPAERARIGIADKILTRIRTQETVYKTQSSFLLDSQQMAKSLSLATEKSLILIDEYGKGTDILDGPSLFGSIMLNMSKSEKCPRIIACTHFHELFNENVLTENIKGIKHYCTDILISQKYNLLETAHVGEDHESEGITFLFKVKEGISKQSFGIYCAKVCGLSRDIVERAEELSRMINRGDDVVQQCGNLTEKEMREFQKNQEIVKKFLSWDLDLETTTTSENLRLKLKNFLR</sequence>